<sequence length="157" mass="17600">MFCPFCRHPDSRVIDSRTSDDGLSIRRRRQCPECGRRFSTTETASLSVIKRSGVVEPFSREKIVLGVRKACQGRPVTDSDLAVLAQKVEETIRSTGASQIEANDIGLAILPELRELDEVAYLRFASVYQAFDSLEDFESAIQQLRVEHRGEPADVQV</sequence>
<evidence type="ECO:0000255" key="1">
    <source>
        <dbReference type="HAMAP-Rule" id="MF_00440"/>
    </source>
</evidence>
<organism>
    <name type="scientific">Leifsonia xyli subsp. xyli (strain CTCB07)</name>
    <dbReference type="NCBI Taxonomy" id="281090"/>
    <lineage>
        <taxon>Bacteria</taxon>
        <taxon>Bacillati</taxon>
        <taxon>Actinomycetota</taxon>
        <taxon>Actinomycetes</taxon>
        <taxon>Micrococcales</taxon>
        <taxon>Microbacteriaceae</taxon>
        <taxon>Leifsonia</taxon>
    </lineage>
</organism>
<proteinExistence type="inferred from homology"/>
<comment type="function">
    <text evidence="1">Negatively regulates transcription of bacterial ribonucleotide reductase nrd genes and operons by binding to NrdR-boxes.</text>
</comment>
<comment type="cofactor">
    <cofactor evidence="1">
        <name>Zn(2+)</name>
        <dbReference type="ChEBI" id="CHEBI:29105"/>
    </cofactor>
    <text evidence="1">Binds 1 zinc ion.</text>
</comment>
<comment type="similarity">
    <text evidence="1">Belongs to the NrdR family.</text>
</comment>
<reference key="1">
    <citation type="journal article" date="2004" name="Mol. Plant Microbe Interact.">
        <title>The genome sequence of the Gram-positive sugarcane pathogen Leifsonia xyli subsp. xyli.</title>
        <authorList>
            <person name="Monteiro-Vitorello C.B."/>
            <person name="Camargo L.E.A."/>
            <person name="Van Sluys M.A."/>
            <person name="Kitajima J.P."/>
            <person name="Truffi D."/>
            <person name="do Amaral A.M."/>
            <person name="Harakava R."/>
            <person name="de Oliveira J.C.F."/>
            <person name="Wood D."/>
            <person name="de Oliveira M.C."/>
            <person name="Miyaki C.Y."/>
            <person name="Takita M.A."/>
            <person name="da Silva A.C.R."/>
            <person name="Furlan L.R."/>
            <person name="Carraro D.M."/>
            <person name="Camarotte G."/>
            <person name="Almeida N.F. Jr."/>
            <person name="Carrer H."/>
            <person name="Coutinho L.L."/>
            <person name="El-Dorry H.A."/>
            <person name="Ferro M.I.T."/>
            <person name="Gagliardi P.R."/>
            <person name="Giglioti E."/>
            <person name="Goldman M.H.S."/>
            <person name="Goldman G.H."/>
            <person name="Kimura E.T."/>
            <person name="Ferro E.S."/>
            <person name="Kuramae E.E."/>
            <person name="Lemos E.G.M."/>
            <person name="Lemos M.V.F."/>
            <person name="Mauro S.M.Z."/>
            <person name="Machado M.A."/>
            <person name="Marino C.L."/>
            <person name="Menck C.F."/>
            <person name="Nunes L.R."/>
            <person name="Oliveira R.C."/>
            <person name="Pereira G.G."/>
            <person name="Siqueira W."/>
            <person name="de Souza A.A."/>
            <person name="Tsai S.M."/>
            <person name="Zanca A.S."/>
            <person name="Simpson A.J.G."/>
            <person name="Brumbley S.M."/>
            <person name="Setubal J.C."/>
        </authorList>
    </citation>
    <scope>NUCLEOTIDE SEQUENCE [LARGE SCALE GENOMIC DNA]</scope>
    <source>
        <strain>CTCB07</strain>
    </source>
</reference>
<accession>Q6AE77</accession>
<dbReference type="EMBL" id="AE016822">
    <property type="protein sequence ID" value="AAT89319.1"/>
    <property type="molecule type" value="Genomic_DNA"/>
</dbReference>
<dbReference type="RefSeq" id="WP_011186309.1">
    <property type="nucleotide sequence ID" value="NC_006087.1"/>
</dbReference>
<dbReference type="SMR" id="Q6AE77"/>
<dbReference type="STRING" id="281090.Lxx15110"/>
<dbReference type="KEGG" id="lxx:Lxx15110"/>
<dbReference type="eggNOG" id="COG1327">
    <property type="taxonomic scope" value="Bacteria"/>
</dbReference>
<dbReference type="HOGENOM" id="CLU_108412_1_0_11"/>
<dbReference type="Proteomes" id="UP000001306">
    <property type="component" value="Chromosome"/>
</dbReference>
<dbReference type="GO" id="GO:0005524">
    <property type="term" value="F:ATP binding"/>
    <property type="evidence" value="ECO:0007669"/>
    <property type="project" value="UniProtKB-KW"/>
</dbReference>
<dbReference type="GO" id="GO:0003677">
    <property type="term" value="F:DNA binding"/>
    <property type="evidence" value="ECO:0007669"/>
    <property type="project" value="UniProtKB-KW"/>
</dbReference>
<dbReference type="GO" id="GO:0008270">
    <property type="term" value="F:zinc ion binding"/>
    <property type="evidence" value="ECO:0007669"/>
    <property type="project" value="UniProtKB-UniRule"/>
</dbReference>
<dbReference type="GO" id="GO:0045892">
    <property type="term" value="P:negative regulation of DNA-templated transcription"/>
    <property type="evidence" value="ECO:0007669"/>
    <property type="project" value="UniProtKB-UniRule"/>
</dbReference>
<dbReference type="HAMAP" id="MF_00440">
    <property type="entry name" value="NrdR"/>
    <property type="match status" value="1"/>
</dbReference>
<dbReference type="InterPro" id="IPR005144">
    <property type="entry name" value="ATP-cone_dom"/>
</dbReference>
<dbReference type="InterPro" id="IPR055173">
    <property type="entry name" value="NrdR-like_N"/>
</dbReference>
<dbReference type="InterPro" id="IPR003796">
    <property type="entry name" value="RNR_NrdR-like"/>
</dbReference>
<dbReference type="NCBIfam" id="TIGR00244">
    <property type="entry name" value="transcriptional regulator NrdR"/>
    <property type="match status" value="1"/>
</dbReference>
<dbReference type="PANTHER" id="PTHR30455">
    <property type="entry name" value="TRANSCRIPTIONAL REPRESSOR NRDR"/>
    <property type="match status" value="1"/>
</dbReference>
<dbReference type="PANTHER" id="PTHR30455:SF2">
    <property type="entry name" value="TRANSCRIPTIONAL REPRESSOR NRDR"/>
    <property type="match status" value="1"/>
</dbReference>
<dbReference type="Pfam" id="PF03477">
    <property type="entry name" value="ATP-cone"/>
    <property type="match status" value="1"/>
</dbReference>
<dbReference type="Pfam" id="PF22811">
    <property type="entry name" value="Zn_ribbon_NrdR"/>
    <property type="match status" value="1"/>
</dbReference>
<dbReference type="PROSITE" id="PS51161">
    <property type="entry name" value="ATP_CONE"/>
    <property type="match status" value="1"/>
</dbReference>
<protein>
    <recommendedName>
        <fullName evidence="1">Transcriptional repressor NrdR</fullName>
    </recommendedName>
</protein>
<feature type="chain" id="PRO_0000182312" description="Transcriptional repressor NrdR">
    <location>
        <begin position="1"/>
        <end position="157"/>
    </location>
</feature>
<feature type="domain" description="ATP-cone" evidence="1">
    <location>
        <begin position="46"/>
        <end position="136"/>
    </location>
</feature>
<feature type="zinc finger region" evidence="1">
    <location>
        <begin position="3"/>
        <end position="34"/>
    </location>
</feature>
<keyword id="KW-0067">ATP-binding</keyword>
<keyword id="KW-0238">DNA-binding</keyword>
<keyword id="KW-0479">Metal-binding</keyword>
<keyword id="KW-0547">Nucleotide-binding</keyword>
<keyword id="KW-1185">Reference proteome</keyword>
<keyword id="KW-0678">Repressor</keyword>
<keyword id="KW-0804">Transcription</keyword>
<keyword id="KW-0805">Transcription regulation</keyword>
<keyword id="KW-0862">Zinc</keyword>
<keyword id="KW-0863">Zinc-finger</keyword>
<name>NRDR_LEIXX</name>
<gene>
    <name evidence="1" type="primary">nrdR</name>
    <name type="ordered locus">Lxx15110</name>
</gene>